<reference key="1">
    <citation type="journal article" date="1999" name="Int. J. Syst. Bacteriol.">
        <title>Phylogenetic analysis of genus Marinilabilia and related bacteria based on the amino acid sequences of GyrB and amended description of Marinilabilia salmonicolor with Marinilabilia agarovorans as its subjective synonym.</title>
        <authorList>
            <person name="Suzuki M."/>
            <person name="Nakagawa Y."/>
            <person name="Harayama S."/>
            <person name="Yamamoto S."/>
        </authorList>
    </citation>
    <scope>NUCLEOTIDE SEQUENCE [GENOMIC DNA]</scope>
    <source>
        <strain>IAM 12607</strain>
    </source>
</reference>
<keyword id="KW-0067">ATP-binding</keyword>
<keyword id="KW-0963">Cytoplasm</keyword>
<keyword id="KW-0238">DNA-binding</keyword>
<keyword id="KW-0413">Isomerase</keyword>
<keyword id="KW-0460">Magnesium</keyword>
<keyword id="KW-0479">Metal-binding</keyword>
<keyword id="KW-0547">Nucleotide-binding</keyword>
<keyword id="KW-0799">Topoisomerase</keyword>
<proteinExistence type="inferred from homology"/>
<comment type="function">
    <text evidence="1">A type II topoisomerase that negatively supercoils closed circular double-stranded (ds) DNA in an ATP-dependent manner to modulate DNA topology and maintain chromosomes in an underwound state. Negative supercoiling favors strand separation, and DNA replication, transcription, recombination and repair, all of which involve strand separation. Also able to catalyze the interconversion of other topological isomers of dsDNA rings, including catenanes and knotted rings. Type II topoisomerases break and join 2 DNA strands simultaneously in an ATP-dependent manner.</text>
</comment>
<comment type="catalytic activity">
    <reaction evidence="2">
        <text>ATP-dependent breakage, passage and rejoining of double-stranded DNA.</text>
        <dbReference type="EC" id="5.6.2.2"/>
    </reaction>
</comment>
<comment type="cofactor">
    <cofactor evidence="2">
        <name>Mg(2+)</name>
        <dbReference type="ChEBI" id="CHEBI:18420"/>
    </cofactor>
    <cofactor evidence="2">
        <name>Mn(2+)</name>
        <dbReference type="ChEBI" id="CHEBI:29035"/>
    </cofactor>
    <cofactor evidence="2">
        <name>Ca(2+)</name>
        <dbReference type="ChEBI" id="CHEBI:29108"/>
    </cofactor>
    <text evidence="2">Binds two Mg(2+) per subunit. The magnesium ions form salt bridges with both the protein and the DNA. Can also accept other divalent metal cations, such as Mn(2+) or Ca(2+).</text>
</comment>
<comment type="subunit">
    <text evidence="1">Heterotetramer, composed of two GyrA and two GyrB chains. In the heterotetramer, GyrA contains the active site tyrosine that forms a transient covalent intermediate with DNA, while GyrB binds cofactors and catalyzes ATP hydrolysis.</text>
</comment>
<comment type="subcellular location">
    <subcellularLocation>
        <location evidence="1">Cytoplasm</location>
    </subcellularLocation>
</comment>
<comment type="miscellaneous">
    <text evidence="1">Few gyrases are as efficient as E.coli at forming negative supercoils. Not all organisms have 2 type II topoisomerases; in organisms with a single type II topoisomerase this enzyme also has to decatenate newly replicated chromosomes.</text>
</comment>
<comment type="similarity">
    <text evidence="3">Belongs to the type II topoisomerase GyrB family.</text>
</comment>
<sequence length="478" mass="53701">DKDSYKVSGGLHGVGVSCVNALSTDMKVTVYSHGKVHQQEYKKGIPQYDVKEIGESDLHGTKVQFLPDDTIFTSSEYKYETIANRLRELSFLNKGIRITLQDHRQVDAEGKSEIEMFHSEGGLREFVDYLDSTREKLIPTPLYMESDKGPIPVEVAMLYNTSYSENVFSYVNNINTIEGGTHVAGFRRALTRTLKSYADKSGMLEKLKMEVTGDDFREGLTAVISVKVQEPQFEGQTKTKLGNSDVMGAVDQVVGEMLNTYLEENPKEAKIIVQKVILAAQARNAARKAREMVQRKNVLSGSGLPGKLADCSESDPEKCELYLVEGDSAGGSAKQGRDRKYHAILPLRGKILNVEKAQEHRIYENDEIKNMITALGVSFGTEEGEKVLNLTKLRYHKVIIMTDADIDGSHIRTLILTFFFRYMRALIDGGHVYIAQPPLYLVKRGKEEKYCWTEEQREAAVKELAKDGKEDSVGIQRY</sequence>
<dbReference type="EC" id="5.6.2.2" evidence="2"/>
<dbReference type="EMBL" id="AB015037">
    <property type="protein sequence ID" value="BAA90686.1"/>
    <property type="molecule type" value="Genomic_DNA"/>
</dbReference>
<dbReference type="SMR" id="Q9LCK1"/>
<dbReference type="GO" id="GO:0005737">
    <property type="term" value="C:cytoplasm"/>
    <property type="evidence" value="ECO:0007669"/>
    <property type="project" value="UniProtKB-SubCell"/>
</dbReference>
<dbReference type="GO" id="GO:0005524">
    <property type="term" value="F:ATP binding"/>
    <property type="evidence" value="ECO:0007669"/>
    <property type="project" value="UniProtKB-KW"/>
</dbReference>
<dbReference type="GO" id="GO:0003677">
    <property type="term" value="F:DNA binding"/>
    <property type="evidence" value="ECO:0007669"/>
    <property type="project" value="UniProtKB-KW"/>
</dbReference>
<dbReference type="GO" id="GO:0003918">
    <property type="term" value="F:DNA topoisomerase type II (double strand cut, ATP-hydrolyzing) activity"/>
    <property type="evidence" value="ECO:0007669"/>
    <property type="project" value="UniProtKB-EC"/>
</dbReference>
<dbReference type="GO" id="GO:0046872">
    <property type="term" value="F:metal ion binding"/>
    <property type="evidence" value="ECO:0007669"/>
    <property type="project" value="UniProtKB-KW"/>
</dbReference>
<dbReference type="GO" id="GO:0006265">
    <property type="term" value="P:DNA topological change"/>
    <property type="evidence" value="ECO:0007669"/>
    <property type="project" value="InterPro"/>
</dbReference>
<dbReference type="CDD" id="cd00822">
    <property type="entry name" value="TopoII_Trans_DNA_gyrase"/>
    <property type="match status" value="1"/>
</dbReference>
<dbReference type="CDD" id="cd03366">
    <property type="entry name" value="TOPRIM_TopoIIA_GyrB"/>
    <property type="match status" value="1"/>
</dbReference>
<dbReference type="FunFam" id="3.30.230.10:FF:000005">
    <property type="entry name" value="DNA gyrase subunit B"/>
    <property type="match status" value="1"/>
</dbReference>
<dbReference type="FunFam" id="3.40.50.670:FF:000001">
    <property type="entry name" value="DNA topoisomerase 2"/>
    <property type="match status" value="1"/>
</dbReference>
<dbReference type="Gene3D" id="3.30.230.10">
    <property type="match status" value="1"/>
</dbReference>
<dbReference type="Gene3D" id="3.40.50.670">
    <property type="match status" value="1"/>
</dbReference>
<dbReference type="Gene3D" id="3.30.565.10">
    <property type="entry name" value="Histidine kinase-like ATPase, C-terminal domain"/>
    <property type="match status" value="1"/>
</dbReference>
<dbReference type="InterPro" id="IPR036890">
    <property type="entry name" value="HATPase_C_sf"/>
</dbReference>
<dbReference type="InterPro" id="IPR020568">
    <property type="entry name" value="Ribosomal_Su5_D2-typ_SF"/>
</dbReference>
<dbReference type="InterPro" id="IPR014721">
    <property type="entry name" value="Ribsml_uS5_D2-typ_fold_subgr"/>
</dbReference>
<dbReference type="InterPro" id="IPR001241">
    <property type="entry name" value="Topo_IIA"/>
</dbReference>
<dbReference type="InterPro" id="IPR013760">
    <property type="entry name" value="Topo_IIA-like_dom_sf"/>
</dbReference>
<dbReference type="InterPro" id="IPR000565">
    <property type="entry name" value="Topo_IIA_B"/>
</dbReference>
<dbReference type="InterPro" id="IPR013759">
    <property type="entry name" value="Topo_IIA_B_C"/>
</dbReference>
<dbReference type="InterPro" id="IPR013506">
    <property type="entry name" value="Topo_IIA_bsu_dom2"/>
</dbReference>
<dbReference type="InterPro" id="IPR018522">
    <property type="entry name" value="TopoIIA_CS"/>
</dbReference>
<dbReference type="InterPro" id="IPR006171">
    <property type="entry name" value="TOPRIM_dom"/>
</dbReference>
<dbReference type="InterPro" id="IPR034160">
    <property type="entry name" value="TOPRIM_GyrB"/>
</dbReference>
<dbReference type="PANTHER" id="PTHR45866:SF1">
    <property type="entry name" value="DNA GYRASE SUBUNIT B, MITOCHONDRIAL"/>
    <property type="match status" value="1"/>
</dbReference>
<dbReference type="PANTHER" id="PTHR45866">
    <property type="entry name" value="DNA GYRASE/TOPOISOMERASE SUBUNIT B"/>
    <property type="match status" value="1"/>
</dbReference>
<dbReference type="Pfam" id="PF00204">
    <property type="entry name" value="DNA_gyraseB"/>
    <property type="match status" value="1"/>
</dbReference>
<dbReference type="Pfam" id="PF01751">
    <property type="entry name" value="Toprim"/>
    <property type="match status" value="1"/>
</dbReference>
<dbReference type="PRINTS" id="PR01159">
    <property type="entry name" value="DNAGYRASEB"/>
</dbReference>
<dbReference type="PRINTS" id="PR00418">
    <property type="entry name" value="TPI2FAMILY"/>
</dbReference>
<dbReference type="SMART" id="SM00433">
    <property type="entry name" value="TOP2c"/>
    <property type="match status" value="1"/>
</dbReference>
<dbReference type="SUPFAM" id="SSF55874">
    <property type="entry name" value="ATPase domain of HSP90 chaperone/DNA topoisomerase II/histidine kinase"/>
    <property type="match status" value="1"/>
</dbReference>
<dbReference type="SUPFAM" id="SSF54211">
    <property type="entry name" value="Ribosomal protein S5 domain 2-like"/>
    <property type="match status" value="1"/>
</dbReference>
<dbReference type="SUPFAM" id="SSF56719">
    <property type="entry name" value="Type II DNA topoisomerase"/>
    <property type="match status" value="1"/>
</dbReference>
<dbReference type="PROSITE" id="PS00177">
    <property type="entry name" value="TOPOISOMERASE_II"/>
    <property type="match status" value="1"/>
</dbReference>
<dbReference type="PROSITE" id="PS50880">
    <property type="entry name" value="TOPRIM"/>
    <property type="match status" value="1"/>
</dbReference>
<protein>
    <recommendedName>
        <fullName>DNA gyrase subunit B</fullName>
        <ecNumber evidence="2">5.6.2.2</ecNumber>
    </recommendedName>
</protein>
<name>GYRB_CYTHU</name>
<feature type="chain" id="PRO_0000145308" description="DNA gyrase subunit B">
    <location>
        <begin position="1" status="less than"/>
        <end position="478" status="greater than"/>
    </location>
</feature>
<feature type="domain" description="Toprim" evidence="2">
    <location>
        <begin position="319"/>
        <end position="438"/>
    </location>
</feature>
<feature type="binding site" evidence="2">
    <location>
        <position position="325"/>
    </location>
    <ligand>
        <name>Mg(2+)</name>
        <dbReference type="ChEBI" id="CHEBI:18420"/>
        <label>1</label>
        <note>catalytic</note>
    </ligand>
</feature>
<feature type="binding site" evidence="2">
    <location>
        <position position="403"/>
    </location>
    <ligand>
        <name>Mg(2+)</name>
        <dbReference type="ChEBI" id="CHEBI:18420"/>
        <label>1</label>
        <note>catalytic</note>
    </ligand>
</feature>
<feature type="binding site" evidence="2">
    <location>
        <position position="403"/>
    </location>
    <ligand>
        <name>Mg(2+)</name>
        <dbReference type="ChEBI" id="CHEBI:18420"/>
        <label>2</label>
    </ligand>
</feature>
<feature type="binding site" evidence="2">
    <location>
        <position position="405"/>
    </location>
    <ligand>
        <name>Mg(2+)</name>
        <dbReference type="ChEBI" id="CHEBI:18420"/>
        <label>2</label>
    </ligand>
</feature>
<feature type="site" description="Interaction with DNA" evidence="2">
    <location>
        <position position="350"/>
    </location>
</feature>
<feature type="site" description="Interaction with DNA" evidence="2">
    <location>
        <position position="353"/>
    </location>
</feature>
<feature type="non-terminal residue">
    <location>
        <position position="1"/>
    </location>
</feature>
<feature type="non-terminal residue">
    <location>
        <position position="478"/>
    </location>
</feature>
<gene>
    <name type="primary">gyrB</name>
</gene>
<accession>Q9LCK1</accession>
<evidence type="ECO:0000250" key="1">
    <source>
        <dbReference type="UniProtKB" id="P0AES6"/>
    </source>
</evidence>
<evidence type="ECO:0000255" key="2">
    <source>
        <dbReference type="PROSITE-ProRule" id="PRU00995"/>
    </source>
</evidence>
<evidence type="ECO:0000305" key="3"/>
<organism>
    <name type="scientific">Cytophaga hutchinsonii</name>
    <dbReference type="NCBI Taxonomy" id="985"/>
    <lineage>
        <taxon>Bacteria</taxon>
        <taxon>Pseudomonadati</taxon>
        <taxon>Bacteroidota</taxon>
        <taxon>Cytophagia</taxon>
        <taxon>Cytophagales</taxon>
        <taxon>Cytophagaceae</taxon>
        <taxon>Cytophaga</taxon>
    </lineage>
</organism>